<dbReference type="EMBL" id="X95453">
    <property type="protein sequence ID" value="CAA64722.1"/>
    <property type="status" value="ALT_INIT"/>
    <property type="molecule type" value="mRNA"/>
</dbReference>
<dbReference type="EMBL" id="X95453">
    <property type="protein sequence ID" value="CAA64723.1"/>
    <property type="status" value="ALT_INIT"/>
    <property type="molecule type" value="mRNA"/>
</dbReference>
<dbReference type="EMBL" id="X95454">
    <property type="protein sequence ID" value="CAA64724.1"/>
    <property type="molecule type" value="mRNA"/>
</dbReference>
<dbReference type="EMBL" id="AE014297">
    <property type="protein sequence ID" value="AAN13462.1"/>
    <property type="status" value="ALT_SEQ"/>
    <property type="molecule type" value="Genomic_DNA"/>
</dbReference>
<dbReference type="EMBL" id="AE014297">
    <property type="protein sequence ID" value="AAN13464.2"/>
    <property type="status" value="ALT_SEQ"/>
    <property type="molecule type" value="Genomic_DNA"/>
</dbReference>
<dbReference type="EMBL" id="AE014297">
    <property type="protein sequence ID" value="AAO41538.2"/>
    <property type="status" value="ALT_SEQ"/>
    <property type="molecule type" value="Genomic_DNA"/>
</dbReference>
<dbReference type="RefSeq" id="NP_731457.2">
    <property type="nucleotide sequence ID" value="NM_169332.3"/>
</dbReference>
<dbReference type="RefSeq" id="NP_788628.2">
    <property type="nucleotide sequence ID" value="NM_176451.3"/>
</dbReference>
<dbReference type="BioGRID" id="66396">
    <property type="interactions" value="9"/>
</dbReference>
<dbReference type="FunCoup" id="Q24546">
    <property type="interactions" value="1"/>
</dbReference>
<dbReference type="IntAct" id="Q24546">
    <property type="interactions" value="2"/>
</dbReference>
<dbReference type="STRING" id="7227.FBpp0099901"/>
<dbReference type="GlyGen" id="Q24546">
    <property type="glycosylation" value="2 sites, 1 O-linked glycan (1 site)"/>
</dbReference>
<dbReference type="iPTMnet" id="Q24546"/>
<dbReference type="PaxDb" id="7227-FBpp0099902"/>
<dbReference type="PeptideAtlas" id="Q24546"/>
<dbReference type="GeneID" id="41247"/>
<dbReference type="KEGG" id="dme:Dmel_CG3985"/>
<dbReference type="UCSC" id="CG3985-RA">
    <molecule id="Q24546-1"/>
    <property type="organism name" value="d. melanogaster"/>
</dbReference>
<dbReference type="AGR" id="FB:FBgn0004575"/>
<dbReference type="CTD" id="41247"/>
<dbReference type="FlyBase" id="FBgn0004575">
    <property type="gene designation" value="Syn"/>
</dbReference>
<dbReference type="VEuPathDB" id="VectorBase:FBgn0004575"/>
<dbReference type="eggNOG" id="KOG3895">
    <property type="taxonomic scope" value="Eukaryota"/>
</dbReference>
<dbReference type="HOGENOM" id="CLU_010582_1_0_1"/>
<dbReference type="InParanoid" id="Q24546"/>
<dbReference type="OrthoDB" id="10249572at2759"/>
<dbReference type="Reactome" id="R-DME-181429">
    <property type="pathway name" value="Serotonin Neurotransmitter Release Cycle"/>
</dbReference>
<dbReference type="Reactome" id="R-DME-212676">
    <property type="pathway name" value="Dopamine Neurotransmitter Release Cycle"/>
</dbReference>
<dbReference type="BioGRID-ORCS" id="41247">
    <property type="hits" value="0 hits in 3 CRISPR screens"/>
</dbReference>
<dbReference type="ChiTaRS" id="Sdc">
    <property type="organism name" value="fly"/>
</dbReference>
<dbReference type="GenomeRNAi" id="41247"/>
<dbReference type="PRO" id="PR:Q24546"/>
<dbReference type="Proteomes" id="UP000000803">
    <property type="component" value="Chromosome 3R"/>
</dbReference>
<dbReference type="ExpressionAtlas" id="Q24546">
    <property type="expression patterns" value="baseline and differential"/>
</dbReference>
<dbReference type="GO" id="GO:0030672">
    <property type="term" value="C:synaptic vesicle membrane"/>
    <property type="evidence" value="ECO:0000318"/>
    <property type="project" value="GO_Central"/>
</dbReference>
<dbReference type="GO" id="GO:0043195">
    <property type="term" value="C:terminal bouton"/>
    <property type="evidence" value="ECO:0000314"/>
    <property type="project" value="FlyBase"/>
</dbReference>
<dbReference type="GO" id="GO:0005524">
    <property type="term" value="F:ATP binding"/>
    <property type="evidence" value="ECO:0007669"/>
    <property type="project" value="InterPro"/>
</dbReference>
<dbReference type="GO" id="GO:0008306">
    <property type="term" value="P:associative learning"/>
    <property type="evidence" value="ECO:0000315"/>
    <property type="project" value="FlyBase"/>
</dbReference>
<dbReference type="GO" id="GO:0048149">
    <property type="term" value="P:behavioral response to ethanol"/>
    <property type="evidence" value="ECO:0000315"/>
    <property type="project" value="FlyBase"/>
</dbReference>
<dbReference type="GO" id="GO:0008049">
    <property type="term" value="P:male courtship behavior"/>
    <property type="evidence" value="ECO:0000315"/>
    <property type="project" value="FlyBase"/>
</dbReference>
<dbReference type="GO" id="GO:0007613">
    <property type="term" value="P:memory"/>
    <property type="evidence" value="ECO:0000315"/>
    <property type="project" value="FlyBase"/>
</dbReference>
<dbReference type="GO" id="GO:0008355">
    <property type="term" value="P:olfactory learning"/>
    <property type="evidence" value="ECO:0000315"/>
    <property type="project" value="FlyBase"/>
</dbReference>
<dbReference type="GO" id="GO:0071632">
    <property type="term" value="P:optomotor response"/>
    <property type="evidence" value="ECO:0000315"/>
    <property type="project" value="FlyBase"/>
</dbReference>
<dbReference type="GO" id="GO:0009408">
    <property type="term" value="P:response to heat"/>
    <property type="evidence" value="ECO:0000315"/>
    <property type="project" value="FlyBase"/>
</dbReference>
<dbReference type="GO" id="GO:0050808">
    <property type="term" value="P:synapse organization"/>
    <property type="evidence" value="ECO:0000318"/>
    <property type="project" value="GO_Central"/>
</dbReference>
<dbReference type="GO" id="GO:0051124">
    <property type="term" value="P:synaptic assembly at neuromuscular junction"/>
    <property type="evidence" value="ECO:0000315"/>
    <property type="project" value="FlyBase"/>
</dbReference>
<dbReference type="GO" id="GO:0097091">
    <property type="term" value="P:synaptic vesicle clustering"/>
    <property type="evidence" value="ECO:0000318"/>
    <property type="project" value="GO_Central"/>
</dbReference>
<dbReference type="GO" id="GO:0016079">
    <property type="term" value="P:synaptic vesicle exocytosis"/>
    <property type="evidence" value="ECO:0000250"/>
    <property type="project" value="FlyBase"/>
</dbReference>
<dbReference type="GO" id="GO:0072553">
    <property type="term" value="P:terminal button organization"/>
    <property type="evidence" value="ECO:0000315"/>
    <property type="project" value="FlyBase"/>
</dbReference>
<dbReference type="FunFam" id="3.30.1490.20:FF:000029">
    <property type="entry name" value="synapsin"/>
    <property type="match status" value="1"/>
</dbReference>
<dbReference type="FunFam" id="3.40.50.20:FF:000008">
    <property type="entry name" value="Synapsin III"/>
    <property type="match status" value="1"/>
</dbReference>
<dbReference type="FunFam" id="3.30.470.20:FF:000059">
    <property type="entry name" value="Synapsin-3"/>
    <property type="match status" value="1"/>
</dbReference>
<dbReference type="Gene3D" id="3.40.50.20">
    <property type="match status" value="1"/>
</dbReference>
<dbReference type="Gene3D" id="3.30.1490.20">
    <property type="entry name" value="ATP-grasp fold, A domain"/>
    <property type="match status" value="1"/>
</dbReference>
<dbReference type="Gene3D" id="3.30.470.20">
    <property type="entry name" value="ATP-grasp fold, B domain"/>
    <property type="match status" value="1"/>
</dbReference>
<dbReference type="InterPro" id="IPR013815">
    <property type="entry name" value="ATP_grasp_subdomain_1"/>
</dbReference>
<dbReference type="InterPro" id="IPR016185">
    <property type="entry name" value="PreATP-grasp_dom_sf"/>
</dbReference>
<dbReference type="InterPro" id="IPR001359">
    <property type="entry name" value="Synapsin"/>
</dbReference>
<dbReference type="InterPro" id="IPR020898">
    <property type="entry name" value="Synapsin_ATP-bd_dom"/>
</dbReference>
<dbReference type="InterPro" id="IPR020897">
    <property type="entry name" value="Synapsin_pre-ATP-grasp_dom"/>
</dbReference>
<dbReference type="PANTHER" id="PTHR10841">
    <property type="entry name" value="SYNAPSIN"/>
    <property type="match status" value="1"/>
</dbReference>
<dbReference type="PANTHER" id="PTHR10841:SF17">
    <property type="entry name" value="SYNAPSIN"/>
    <property type="match status" value="1"/>
</dbReference>
<dbReference type="Pfam" id="PF02078">
    <property type="entry name" value="Synapsin"/>
    <property type="match status" value="1"/>
</dbReference>
<dbReference type="Pfam" id="PF02750">
    <property type="entry name" value="Synapsin_C"/>
    <property type="match status" value="1"/>
</dbReference>
<dbReference type="PRINTS" id="PR01368">
    <property type="entry name" value="SYNAPSIN"/>
</dbReference>
<dbReference type="SUPFAM" id="SSF56059">
    <property type="entry name" value="Glutathione synthetase ATP-binding domain-like"/>
    <property type="match status" value="1"/>
</dbReference>
<dbReference type="SUPFAM" id="SSF52440">
    <property type="entry name" value="PreATP-grasp domain"/>
    <property type="match status" value="1"/>
</dbReference>
<comment type="function">
    <text evidence="2">Plays a significant role in nervous system function, which is subtle at the cellular level but manifests itself in complex behavior.</text>
</comment>
<comment type="subunit">
    <text evidence="4">Identified in a complex with Syt1 and nwk.</text>
</comment>
<comment type="subcellular location">
    <subcellularLocation>
        <location>Synapse</location>
    </subcellularLocation>
</comment>
<comment type="alternative products">
    <event type="alternative splicing"/>
    <isoform>
        <id>Q24546-1</id>
        <name>F</name>
        <name>Syn1-RT</name>
        <sequence type="displayed"/>
    </isoform>
    <isoform>
        <id>Q24546-3</id>
        <name>C</name>
        <name>Syn2</name>
        <sequence type="described" ref="VSP_013200 VSP_013201"/>
    </isoform>
</comment>
<comment type="tissue specificity">
    <text evidence="5">Widely expressed in the embryonic and adult nervous system synaptic terminals.</text>
</comment>
<comment type="developmental stage">
    <text evidence="5">Detected at all developmental stages after mid-embryogenesis.</text>
</comment>
<comment type="disruption phenotype">
    <text evidence="2">Mutants show no obvious defects in brain morphology and no striking qualitative changes in behavior are observed. Quantitative differenes are seen: mutants show faster habituation of an olfactory jump response, enhanced ethanol tolerance, and significant defects in learning and memory as measured using three different paradigms.</text>
</comment>
<comment type="miscellaneous">
    <text>Readthrough of the terminator UGA may occur between the codons for 581-Met and 583-Glu.</text>
</comment>
<comment type="similarity">
    <text evidence="7">Belongs to the synapsin family.</text>
</comment>
<comment type="sequence caution" evidence="7">
    <conflict type="erroneous gene model prediction">
        <sequence resource="EMBL-CDS" id="AAN13462"/>
    </conflict>
</comment>
<comment type="sequence caution" evidence="7">
    <conflict type="erroneous gene model prediction">
        <sequence resource="EMBL-CDS" id="AAN13464"/>
    </conflict>
</comment>
<comment type="sequence caution" evidence="7">
    <conflict type="erroneous gene model prediction">
        <sequence resource="EMBL-CDS" id="AAO41538"/>
    </conflict>
</comment>
<comment type="sequence caution" evidence="7">
    <conflict type="erroneous initiation">
        <sequence resource="EMBL-CDS" id="CAA64722"/>
    </conflict>
</comment>
<comment type="sequence caution" evidence="7">
    <conflict type="erroneous initiation">
        <sequence resource="EMBL-CDS" id="CAA64723"/>
    </conflict>
</comment>
<evidence type="ECO:0000256" key="1">
    <source>
        <dbReference type="SAM" id="MobiDB-lite"/>
    </source>
</evidence>
<evidence type="ECO:0000269" key="2">
    <source>
    </source>
</evidence>
<evidence type="ECO:0000269" key="3">
    <source>
    </source>
</evidence>
<evidence type="ECO:0000269" key="4">
    <source>
    </source>
</evidence>
<evidence type="ECO:0000269" key="5">
    <source>
    </source>
</evidence>
<evidence type="ECO:0000303" key="6">
    <source>
    </source>
</evidence>
<evidence type="ECO:0000305" key="7"/>
<sequence length="1025" mass="107539">MKRGFSSGDLSSEVDDVDPNSLPPAARPIQDQPTKPPVAGGPPNMPPPPAPGQPAGAAPELSLSFGAGKTPATAAPAPPRGVSAPTSPAKSRESLLQRVQSLTGAARDQGASILGAAVQSATQRAPAFSKDKYFTLLVLDDQNTDWSKYFRGRRLHGDFDIRVEQAEFRDITVVSSADTGPVVTMAAYRSGTRVARSFRPDFVLIRQPPRDGSSDYRSTILGLKYGGVPSINSLHSIYQFQDKPWVFSHLLQLQRRLGRDGFPLIEQTFFPNPRDLFQFTKFPSVLKAGHCHGGVATARLENQSALQDAAGLVSGAGNDSHCYCTIEPYIDAKFSVHIQKIGNNYKAFMRKSITGNWKTNQGSAMLEQITLTEKYKSWVDEISELFGGMEVCGLSVVVAKDGREYIISACDSTFALIGDTQEEDRRQIADLVSGRMQNVCRPSMAQTGPGKLPSRSSVSSRAESPTDEGVAPTPPLPAGPRPAPMGGPPPIPERTSPAVGSIGRLSSRSSISEVPEEPSSSGPSTVGGVRRDSQTSQSSTISSSVSRAGQRPPQTQNSVVEDAEDTMKNLRKTFAGIFGDMXEIANKKRGRTASETSSGSGPGSVPSSAGPGSGFSSSFLGKQFSFAGKGEGVISTQPTQRPSEEPPAIPTTASSAVRPESSVSVSDSRNTDTLTERAGAGYQPVTNYEQQERVNPFDKEPSKSGSAASIHTSSSSSISSSSISSRINRNGNAIQSPPPPAGPPPPPPTNVTAVGSNANSSSGYRNSFSSSLSKDKTSYGNYGSTTSVETITRMDTNTTNIGATATEAGEASGVTAITNISNSDGIVAPTTGTITTSVTTNDWRSAIGMRSASVYSAPAAVTTVLPGDTSGYDSNSIASQGEGLNNPSDLPSYTRPSYSRSESNASKHSDLDVIFGDSKTTPASYGNGKYTRAAGSISDADMIFGGPPSNYKTDRFGASKSMSMTSGGVGSGNGSGSGLGGYKIYDSIQNAAFSDFSDSGSMSSIGSHTKRWSASKEEDDELDLK</sequence>
<name>SYN_DROME</name>
<organism>
    <name type="scientific">Drosophila melanogaster</name>
    <name type="common">Fruit fly</name>
    <dbReference type="NCBI Taxonomy" id="7227"/>
    <lineage>
        <taxon>Eukaryota</taxon>
        <taxon>Metazoa</taxon>
        <taxon>Ecdysozoa</taxon>
        <taxon>Arthropoda</taxon>
        <taxon>Hexapoda</taxon>
        <taxon>Insecta</taxon>
        <taxon>Pterygota</taxon>
        <taxon>Neoptera</taxon>
        <taxon>Endopterygota</taxon>
        <taxon>Diptera</taxon>
        <taxon>Brachycera</taxon>
        <taxon>Muscomorpha</taxon>
        <taxon>Ephydroidea</taxon>
        <taxon>Drosophilidae</taxon>
        <taxon>Drosophila</taxon>
        <taxon>Sophophora</taxon>
    </lineage>
</organism>
<feature type="chain" id="PRO_0000033495" description="Synapsin">
    <location>
        <begin position="1"/>
        <end position="1025"/>
    </location>
</feature>
<feature type="chain" id="PRO_0000033496" description="Synapsin-1">
    <location>
        <begin position="1"/>
        <end position="581"/>
    </location>
</feature>
<feature type="chain" id="PRO_0000033497" description="Synapsin-2">
    <location>
        <begin position="583"/>
        <end position="1025"/>
    </location>
</feature>
<feature type="region of interest" description="Disordered" evidence="1">
    <location>
        <begin position="1"/>
        <end position="94"/>
    </location>
</feature>
<feature type="region of interest" description="Disordered" evidence="1">
    <location>
        <begin position="439"/>
        <end position="784"/>
    </location>
</feature>
<feature type="region of interest" description="Disordered" evidence="1">
    <location>
        <begin position="872"/>
        <end position="910"/>
    </location>
</feature>
<feature type="region of interest" description="Disordered" evidence="1">
    <location>
        <begin position="995"/>
        <end position="1025"/>
    </location>
</feature>
<feature type="compositionally biased region" description="Pro residues" evidence="1">
    <location>
        <begin position="34"/>
        <end position="52"/>
    </location>
</feature>
<feature type="compositionally biased region" description="Low complexity" evidence="1">
    <location>
        <begin position="454"/>
        <end position="463"/>
    </location>
</feature>
<feature type="compositionally biased region" description="Pro residues" evidence="1">
    <location>
        <begin position="472"/>
        <end position="492"/>
    </location>
</feature>
<feature type="compositionally biased region" description="Low complexity" evidence="1">
    <location>
        <begin position="499"/>
        <end position="546"/>
    </location>
</feature>
<feature type="compositionally biased region" description="Low complexity" evidence="1">
    <location>
        <begin position="594"/>
        <end position="626"/>
    </location>
</feature>
<feature type="compositionally biased region" description="Polar residues" evidence="1">
    <location>
        <begin position="651"/>
        <end position="673"/>
    </location>
</feature>
<feature type="compositionally biased region" description="Basic and acidic residues" evidence="1">
    <location>
        <begin position="690"/>
        <end position="702"/>
    </location>
</feature>
<feature type="compositionally biased region" description="Low complexity" evidence="1">
    <location>
        <begin position="703"/>
        <end position="725"/>
    </location>
</feature>
<feature type="compositionally biased region" description="Polar residues" evidence="1">
    <location>
        <begin position="726"/>
        <end position="735"/>
    </location>
</feature>
<feature type="compositionally biased region" description="Pro residues" evidence="1">
    <location>
        <begin position="736"/>
        <end position="749"/>
    </location>
</feature>
<feature type="compositionally biased region" description="Polar residues" evidence="1">
    <location>
        <begin position="750"/>
        <end position="759"/>
    </location>
</feature>
<feature type="compositionally biased region" description="Low complexity" evidence="1">
    <location>
        <begin position="760"/>
        <end position="772"/>
    </location>
</feature>
<feature type="compositionally biased region" description="Polar residues" evidence="1">
    <location>
        <begin position="872"/>
        <end position="904"/>
    </location>
</feature>
<feature type="compositionally biased region" description="Low complexity" evidence="1">
    <location>
        <begin position="995"/>
        <end position="1007"/>
    </location>
</feature>
<feature type="modified residue" description="Phosphoserine" evidence="3">
    <location>
        <position position="539"/>
    </location>
</feature>
<feature type="splice variant" id="VSP_013200" description="In isoform C." evidence="6">
    <original>NVCRPSMAQTGPGKLPSRSSVSSRAESPTDEGVAPTPPLPAGPRPAPMGGPPPIPERTSPAVGSIGRLSSRSSISEVPEEPSSSGPSTVGGVRRD</original>
    <variation>VERLPSQHGADGSGQVALPLLGLFPSRESHGRGRGSNTTTPSWTKTRAHGWTTTDTGAYLTRRGFHWAAEQSQQHFGGAGGTLLVGTQHSGWGAS</variation>
    <location>
        <begin position="438"/>
        <end position="532"/>
    </location>
</feature>
<feature type="splice variant" id="VSP_013201" description="In isoform C." evidence="6">
    <location>
        <begin position="533"/>
        <end position="1025"/>
    </location>
</feature>
<feature type="sequence conflict" description="In Ref. 1; CAA64722/CAA64723." evidence="7" ref="1">
    <original>S</original>
    <variation>G</variation>
    <location>
        <position position="94"/>
    </location>
</feature>
<feature type="sequence conflict" description="In Ref. 1; CAA64722/CAA64723/CAA64724." evidence="7" ref="1">
    <original>V</original>
    <variation>G</variation>
    <location>
        <position position="163"/>
    </location>
</feature>
<feature type="sequence conflict" description="In Ref. 1; CAA64722/CAA64723/CAA64724." evidence="7" ref="1">
    <original>D</original>
    <variation>N</variation>
    <location>
        <position position="411"/>
    </location>
</feature>
<feature type="sequence conflict" description="In Ref. 1; CAA64723." evidence="7" ref="1">
    <original>Q</original>
    <variation>K</variation>
    <location>
        <position position="735"/>
    </location>
</feature>
<feature type="sequence conflict" description="In Ref. 1; CAA64723." evidence="7" ref="1">
    <original>S</original>
    <variation>G</variation>
    <location>
        <position position="987"/>
    </location>
</feature>
<gene>
    <name type="primary">Syn</name>
    <name type="synonym">Syn-1</name>
    <name type="synonym">Syn-2</name>
    <name type="ORF">CG3985</name>
</gene>
<keyword id="KW-0025">Alternative splicing</keyword>
<keyword id="KW-0085">Behavior</keyword>
<keyword id="KW-0903">Direct protein sequencing</keyword>
<keyword id="KW-0597">Phosphoprotein</keyword>
<keyword id="KW-1185">Reference proteome</keyword>
<keyword id="KW-0770">Synapse</keyword>
<proteinExistence type="evidence at protein level"/>
<accession>Q24546</accession>
<accession>Q24544</accession>
<accession>Q24545</accession>
<accession>Q86BA0</accession>
<accession>Q8INM4</accession>
<accession>Q8INM6</accession>
<protein>
    <recommendedName>
        <fullName>Synapsin</fullName>
    </recommendedName>
    <component>
        <recommendedName>
            <fullName>Synapsin-1</fullName>
            <shortName>Syn1</shortName>
        </recommendedName>
        <alternativeName>
            <fullName>Syn1-S</fullName>
        </alternativeName>
    </component>
    <component>
        <recommendedName>
            <fullName>Synapsin-2</fullName>
            <shortName>Syn2</shortName>
        </recommendedName>
    </component>
</protein>
<reference key="1">
    <citation type="journal article" date="1996" name="J. Neurosci.">
        <title>Invertebrate synapsins: a single gene codes for several isoforms in Drosophila.</title>
        <authorList>
            <person name="Klagges B.R.E."/>
            <person name="Heimbeck G."/>
            <person name="Godenschwege T.A."/>
            <person name="Hofbauer A."/>
            <person name="Pflugfelder G.O."/>
            <person name="Reifegerste R."/>
            <person name="Reisch D."/>
            <person name="Schaupp M."/>
            <person name="Buchner S."/>
            <person name="Buchner E."/>
        </authorList>
    </citation>
    <scope>NUCLEOTIDE SEQUENCE [MRNA] (ISOFORM F)</scope>
    <scope>NUCLEOTIDE SEQUENCE [MRNA] OF 145-1025 (ISOFORM C)</scope>
    <scope>TISSUE SPECIFICITY</scope>
    <scope>DEVELOPMENTAL STAGE</scope>
    <source>
        <strain>Berlin</strain>
        <strain>Canton-S</strain>
        <tissue>Head</tissue>
    </source>
</reference>
<reference key="2">
    <citation type="journal article" date="2000" name="Science">
        <title>The genome sequence of Drosophila melanogaster.</title>
        <authorList>
            <person name="Adams M.D."/>
            <person name="Celniker S.E."/>
            <person name="Holt R.A."/>
            <person name="Evans C.A."/>
            <person name="Gocayne J.D."/>
            <person name="Amanatides P.G."/>
            <person name="Scherer S.E."/>
            <person name="Li P.W."/>
            <person name="Hoskins R.A."/>
            <person name="Galle R.F."/>
            <person name="George R.A."/>
            <person name="Lewis S.E."/>
            <person name="Richards S."/>
            <person name="Ashburner M."/>
            <person name="Henderson S.N."/>
            <person name="Sutton G.G."/>
            <person name="Wortman J.R."/>
            <person name="Yandell M.D."/>
            <person name="Zhang Q."/>
            <person name="Chen L.X."/>
            <person name="Brandon R.C."/>
            <person name="Rogers Y.-H.C."/>
            <person name="Blazej R.G."/>
            <person name="Champe M."/>
            <person name="Pfeiffer B.D."/>
            <person name="Wan K.H."/>
            <person name="Doyle C."/>
            <person name="Baxter E.G."/>
            <person name="Helt G."/>
            <person name="Nelson C.R."/>
            <person name="Miklos G.L.G."/>
            <person name="Abril J.F."/>
            <person name="Agbayani A."/>
            <person name="An H.-J."/>
            <person name="Andrews-Pfannkoch C."/>
            <person name="Baldwin D."/>
            <person name="Ballew R.M."/>
            <person name="Basu A."/>
            <person name="Baxendale J."/>
            <person name="Bayraktaroglu L."/>
            <person name="Beasley E.M."/>
            <person name="Beeson K.Y."/>
            <person name="Benos P.V."/>
            <person name="Berman B.P."/>
            <person name="Bhandari D."/>
            <person name="Bolshakov S."/>
            <person name="Borkova D."/>
            <person name="Botchan M.R."/>
            <person name="Bouck J."/>
            <person name="Brokstein P."/>
            <person name="Brottier P."/>
            <person name="Burtis K.C."/>
            <person name="Busam D.A."/>
            <person name="Butler H."/>
            <person name="Cadieu E."/>
            <person name="Center A."/>
            <person name="Chandra I."/>
            <person name="Cherry J.M."/>
            <person name="Cawley S."/>
            <person name="Dahlke C."/>
            <person name="Davenport L.B."/>
            <person name="Davies P."/>
            <person name="de Pablos B."/>
            <person name="Delcher A."/>
            <person name="Deng Z."/>
            <person name="Mays A.D."/>
            <person name="Dew I."/>
            <person name="Dietz S.M."/>
            <person name="Dodson K."/>
            <person name="Doup L.E."/>
            <person name="Downes M."/>
            <person name="Dugan-Rocha S."/>
            <person name="Dunkov B.C."/>
            <person name="Dunn P."/>
            <person name="Durbin K.J."/>
            <person name="Evangelista C.C."/>
            <person name="Ferraz C."/>
            <person name="Ferriera S."/>
            <person name="Fleischmann W."/>
            <person name="Fosler C."/>
            <person name="Gabrielian A.E."/>
            <person name="Garg N.S."/>
            <person name="Gelbart W.M."/>
            <person name="Glasser K."/>
            <person name="Glodek A."/>
            <person name="Gong F."/>
            <person name="Gorrell J.H."/>
            <person name="Gu Z."/>
            <person name="Guan P."/>
            <person name="Harris M."/>
            <person name="Harris N.L."/>
            <person name="Harvey D.A."/>
            <person name="Heiman T.J."/>
            <person name="Hernandez J.R."/>
            <person name="Houck J."/>
            <person name="Hostin D."/>
            <person name="Houston K.A."/>
            <person name="Howland T.J."/>
            <person name="Wei M.-H."/>
            <person name="Ibegwam C."/>
            <person name="Jalali M."/>
            <person name="Kalush F."/>
            <person name="Karpen G.H."/>
            <person name="Ke Z."/>
            <person name="Kennison J.A."/>
            <person name="Ketchum K.A."/>
            <person name="Kimmel B.E."/>
            <person name="Kodira C.D."/>
            <person name="Kraft C.L."/>
            <person name="Kravitz S."/>
            <person name="Kulp D."/>
            <person name="Lai Z."/>
            <person name="Lasko P."/>
            <person name="Lei Y."/>
            <person name="Levitsky A.A."/>
            <person name="Li J.H."/>
            <person name="Li Z."/>
            <person name="Liang Y."/>
            <person name="Lin X."/>
            <person name="Liu X."/>
            <person name="Mattei B."/>
            <person name="McIntosh T.C."/>
            <person name="McLeod M.P."/>
            <person name="McPherson D."/>
            <person name="Merkulov G."/>
            <person name="Milshina N.V."/>
            <person name="Mobarry C."/>
            <person name="Morris J."/>
            <person name="Moshrefi A."/>
            <person name="Mount S.M."/>
            <person name="Moy M."/>
            <person name="Murphy B."/>
            <person name="Murphy L."/>
            <person name="Muzny D.M."/>
            <person name="Nelson D.L."/>
            <person name="Nelson D.R."/>
            <person name="Nelson K.A."/>
            <person name="Nixon K."/>
            <person name="Nusskern D.R."/>
            <person name="Pacleb J.M."/>
            <person name="Palazzolo M."/>
            <person name="Pittman G.S."/>
            <person name="Pan S."/>
            <person name="Pollard J."/>
            <person name="Puri V."/>
            <person name="Reese M.G."/>
            <person name="Reinert K."/>
            <person name="Remington K."/>
            <person name="Saunders R.D.C."/>
            <person name="Scheeler F."/>
            <person name="Shen H."/>
            <person name="Shue B.C."/>
            <person name="Siden-Kiamos I."/>
            <person name="Simpson M."/>
            <person name="Skupski M.P."/>
            <person name="Smith T.J."/>
            <person name="Spier E."/>
            <person name="Spradling A.C."/>
            <person name="Stapleton M."/>
            <person name="Strong R."/>
            <person name="Sun E."/>
            <person name="Svirskas R."/>
            <person name="Tector C."/>
            <person name="Turner R."/>
            <person name="Venter E."/>
            <person name="Wang A.H."/>
            <person name="Wang X."/>
            <person name="Wang Z.-Y."/>
            <person name="Wassarman D.A."/>
            <person name="Weinstock G.M."/>
            <person name="Weissenbach J."/>
            <person name="Williams S.M."/>
            <person name="Woodage T."/>
            <person name="Worley K.C."/>
            <person name="Wu D."/>
            <person name="Yang S."/>
            <person name="Yao Q.A."/>
            <person name="Ye J."/>
            <person name="Yeh R.-F."/>
            <person name="Zaveri J.S."/>
            <person name="Zhan M."/>
            <person name="Zhang G."/>
            <person name="Zhao Q."/>
            <person name="Zheng L."/>
            <person name="Zheng X.H."/>
            <person name="Zhong F.N."/>
            <person name="Zhong W."/>
            <person name="Zhou X."/>
            <person name="Zhu S.C."/>
            <person name="Zhu X."/>
            <person name="Smith H.O."/>
            <person name="Gibbs R.A."/>
            <person name="Myers E.W."/>
            <person name="Rubin G.M."/>
            <person name="Venter J.C."/>
        </authorList>
    </citation>
    <scope>NUCLEOTIDE SEQUENCE [LARGE SCALE GENOMIC DNA]</scope>
    <source>
        <strain>Berkeley</strain>
    </source>
</reference>
<reference key="3">
    <citation type="journal article" date="2002" name="Genome Biol.">
        <title>Annotation of the Drosophila melanogaster euchromatic genome: a systematic review.</title>
        <authorList>
            <person name="Misra S."/>
            <person name="Crosby M.A."/>
            <person name="Mungall C.J."/>
            <person name="Matthews B.B."/>
            <person name="Campbell K.S."/>
            <person name="Hradecky P."/>
            <person name="Huang Y."/>
            <person name="Kaminker J.S."/>
            <person name="Millburn G.H."/>
            <person name="Prochnik S.E."/>
            <person name="Smith C.D."/>
            <person name="Tupy J.L."/>
            <person name="Whitfield E.J."/>
            <person name="Bayraktaroglu L."/>
            <person name="Berman B.P."/>
            <person name="Bettencourt B.R."/>
            <person name="Celniker S.E."/>
            <person name="de Grey A.D.N.J."/>
            <person name="Drysdale R.A."/>
            <person name="Harris N.L."/>
            <person name="Richter J."/>
            <person name="Russo S."/>
            <person name="Schroeder A.J."/>
            <person name="Shu S.Q."/>
            <person name="Stapleton M."/>
            <person name="Yamada C."/>
            <person name="Ashburner M."/>
            <person name="Gelbart W.M."/>
            <person name="Rubin G.M."/>
            <person name="Lewis S.E."/>
        </authorList>
    </citation>
    <scope>GENOME REANNOTATION</scope>
    <scope>ALTERNATIVE SPLICING</scope>
    <source>
        <strain>Berkeley</strain>
    </source>
</reference>
<reference key="4">
    <citation type="journal article" date="2004" name="Eur. J. Neurosci.">
        <title>Flies lacking all synapsins are unexpectedly healthy but are impaired in complex behaviour.</title>
        <authorList>
            <person name="Godenschwege T.A."/>
            <person name="Reisch D."/>
            <person name="Diegelmann S."/>
            <person name="Eberle K."/>
            <person name="Funk N."/>
            <person name="Heisenberg M."/>
            <person name="Hoppe V."/>
            <person name="Hoppe J."/>
            <person name="Klagges B.R.E."/>
            <person name="Martin J.R."/>
            <person name="Nikitina E.A."/>
            <person name="Putz G."/>
            <person name="Reifegerste R."/>
            <person name="Reisch N."/>
            <person name="Rister J."/>
            <person name="Schaupp M."/>
            <person name="Scholz H."/>
            <person name="Schwarzel M."/>
            <person name="Werner U."/>
            <person name="Zars T.D."/>
            <person name="Buchner S."/>
            <person name="Buchner E."/>
        </authorList>
    </citation>
    <scope>PROTEIN SEQUENCE OF 2-10</scope>
    <scope>FUNCTION</scope>
    <scope>DISRUPTION PHENOTYPE</scope>
    <source>
        <tissue>Head</tissue>
    </source>
</reference>
<reference key="5">
    <citation type="journal article" date="2008" name="J. Proteome Res.">
        <title>Phosphoproteome analysis of Drosophila melanogaster embryos.</title>
        <authorList>
            <person name="Zhai B."/>
            <person name="Villen J."/>
            <person name="Beausoleil S.A."/>
            <person name="Mintseris J."/>
            <person name="Gygi S.P."/>
        </authorList>
    </citation>
    <scope>PHOSPHORYLATION [LARGE SCALE ANALYSIS] AT SER-539</scope>
    <scope>IDENTIFICATION BY MASS SPECTROMETRY</scope>
    <source>
        <tissue>Embryo</tissue>
    </source>
</reference>
<reference key="6">
    <citation type="journal article" date="2018" name="Exp. Mol. Med.">
        <title>Regulation of synaptic architecture and synaptic vesicle pools by Nervous wreck at Drosophila Type 1b glutamatergic synapses.</title>
        <authorList>
            <person name="Hur J.H."/>
            <person name="Lee S.H."/>
            <person name="Kim A.Y."/>
            <person name="Koh Y.H."/>
        </authorList>
    </citation>
    <scope>IDENTIFICATION IN A COMPLEX WITH NWK AND SYT1</scope>
</reference>